<reference key="1">
    <citation type="journal article" date="1990" name="Virology">
        <title>Genetic variation and multigene families in African swine fever virus.</title>
        <authorList>
            <person name="de la Vega I."/>
            <person name="Vinuela E."/>
            <person name="Blasco R."/>
        </authorList>
    </citation>
    <scope>NUCLEOTIDE SEQUENCE [GENOMIC DNA]</scope>
</reference>
<organism>
    <name type="scientific">African swine fever virus (isolate Portugal/Lis 57/1957)</name>
    <name type="common">ASFV</name>
    <dbReference type="NCBI Taxonomy" id="10499"/>
    <lineage>
        <taxon>Viruses</taxon>
        <taxon>Varidnaviria</taxon>
        <taxon>Bamfordvirae</taxon>
        <taxon>Nucleocytoviricota</taxon>
        <taxon>Pokkesviricetes</taxon>
        <taxon>Asfuvirales</taxon>
        <taxon>Asfarviridae</taxon>
        <taxon>Asfivirus</taxon>
        <taxon>African swine fever virus</taxon>
    </lineage>
</organism>
<evidence type="ECO:0000255" key="1"/>
<evidence type="ECO:0000305" key="2"/>
<keyword id="KW-0244">Early protein</keyword>
<keyword id="KW-0732">Signal</keyword>
<gene>
    <name type="ORF">LIS121-2</name>
</gene>
<dbReference type="EMBL" id="M58155">
    <property type="protein sequence ID" value="AAA42709.1"/>
    <property type="molecule type" value="Genomic_DNA"/>
</dbReference>
<dbReference type="PIR" id="C45348">
    <property type="entry name" value="C45348"/>
</dbReference>
<dbReference type="InterPro" id="IPR004848">
    <property type="entry name" value="ASFV_fam_110"/>
</dbReference>
<dbReference type="Pfam" id="PF01639">
    <property type="entry name" value="v110"/>
    <property type="match status" value="1"/>
</dbReference>
<name>11014_ASFL5</name>
<organismHost>
    <name type="scientific">Ornithodoros</name>
    <name type="common">relapsing fever ticks</name>
    <dbReference type="NCBI Taxonomy" id="6937"/>
</organismHost>
<organismHost>
    <name type="scientific">Sus scrofa</name>
    <name type="common">Pig</name>
    <dbReference type="NCBI Taxonomy" id="9823"/>
</organismHost>
<sequence length="121" mass="13935">MKVLLGLLLGYSVLILAHELPDLPRTQHPPKSELSYWCTYVPQCDFCWDCQDGICKNKITESRFIDSNHSIVNCRVFRNSMTQSCLYEISSKMPNHFSMECLHPRPYTGNEIFMRTWGGGG</sequence>
<accession>P26706</accession>
<protein>
    <recommendedName>
        <fullName>Protein MGF 110-14L</fullName>
    </recommendedName>
</protein>
<feature type="signal peptide" evidence="1">
    <location>
        <begin position="1"/>
        <end position="17"/>
    </location>
</feature>
<feature type="chain" id="PRO_0000036731" description="Protein MGF 110-14L">
    <location>
        <begin position="18"/>
        <end position="121"/>
    </location>
</feature>
<comment type="similarity">
    <text evidence="2">Belongs to the asfivirus MGF 110 family.</text>
</comment>
<proteinExistence type="inferred from homology"/>